<evidence type="ECO:0000250" key="1">
    <source>
        <dbReference type="UniProtKB" id="O87237"/>
    </source>
</evidence>
<evidence type="ECO:0000250" key="2">
    <source>
        <dbReference type="UniProtKB" id="P86475"/>
    </source>
</evidence>
<evidence type="ECO:0000269" key="3">
    <source>
    </source>
</evidence>
<evidence type="ECO:0000269" key="4">
    <source>
    </source>
</evidence>
<evidence type="ECO:0000303" key="5">
    <source>
    </source>
</evidence>
<evidence type="ECO:0000303" key="6">
    <source>
    </source>
</evidence>
<evidence type="ECO:0000305" key="7"/>
<evidence type="ECO:0000312" key="8">
    <source>
        <dbReference type="EMBL" id="AAU25566.1"/>
    </source>
</evidence>
<evidence type="ECO:0000312" key="9">
    <source>
        <dbReference type="EMBL" id="AAU42940.1"/>
    </source>
</evidence>
<reference evidence="8" key="1">
    <citation type="journal article" date="2004" name="Genome Biol.">
        <title>Complete genome sequence of the industrial bacterium Bacillus licheniformis and comparisons with closely related Bacillus species.</title>
        <authorList>
            <person name="Rey M.W."/>
            <person name="Ramaiya P."/>
            <person name="Nelson B.A."/>
            <person name="Brody-Karpin S.D."/>
            <person name="Zaretsky E.J."/>
            <person name="Tang M."/>
            <person name="Lopez de Leon A."/>
            <person name="Xiang H."/>
            <person name="Gusti V."/>
            <person name="Clausen I.G."/>
            <person name="Olsen P.B."/>
            <person name="Rasmussen M.D."/>
            <person name="Andersen J.T."/>
            <person name="Joergensen P.L."/>
            <person name="Larsen T.S."/>
            <person name="Sorokin A."/>
            <person name="Bolotin A."/>
            <person name="Lapidus A."/>
            <person name="Galleron N."/>
            <person name="Ehrlich S.D."/>
            <person name="Berka R.M."/>
        </authorList>
    </citation>
    <scope>NUCLEOTIDE SEQUENCE [LARGE SCALE GENOMIC DNA]</scope>
    <source>
        <strain>ATCC 14580 / DSM 13 / JCM 2505 / CCUG 7422 / NBRC 12200 / NCIMB 9375 / NCTC 10341 / NRRL NRS-1264 / Gibson 46</strain>
    </source>
</reference>
<reference evidence="9" key="2">
    <citation type="journal article" date="2004" name="J. Mol. Microbiol. Biotechnol.">
        <title>The complete genome sequence of Bacillus licheniformis DSM13, an organism with great industrial potential.</title>
        <authorList>
            <person name="Veith B."/>
            <person name="Herzberg C."/>
            <person name="Steckel S."/>
            <person name="Feesche J."/>
            <person name="Maurer K.H."/>
            <person name="Ehrenreich P."/>
            <person name="Baeumer S."/>
            <person name="Henne A."/>
            <person name="Liesegang H."/>
            <person name="Merkl R."/>
            <person name="Ehrenreich A."/>
            <person name="Gottschalk G."/>
        </authorList>
    </citation>
    <scope>NUCLEOTIDE SEQUENCE [LARGE SCALE GENOMIC DNA]</scope>
    <source>
        <strain>ATCC 14580 / DSM 13 / JCM 2505 / CCUG 7422 / NBRC 12200 / NCIMB 9375 / NCTC 10341 / NRRL NRS-1264 / Gibson 46</strain>
    </source>
</reference>
<reference evidence="7" key="3">
    <citation type="journal article" date="2009" name="Appl. Environ. Microbiol.">
        <title>Identification of a novel two-peptide lantibiotic, lichenicidin, following rational genome mining for LanM proteins.</title>
        <authorList>
            <person name="Begley M."/>
            <person name="Cotter P.D."/>
            <person name="Hill C."/>
            <person name="Ross R.P."/>
        </authorList>
    </citation>
    <scope>IDENTIFICATION</scope>
    <scope>FUNCTION</scope>
    <scope>SUBCELLULAR LOCATION</scope>
    <scope>MASS SPECTROMETRY</scope>
</reference>
<reference evidence="7" key="4">
    <citation type="journal article" date="2009" name="PLoS ONE">
        <title>Production of the novel two-peptide lantibiotic lichenicidin by Bacillus licheniformis DSM 13.</title>
        <authorList>
            <person name="Dischinger J."/>
            <person name="Josten M."/>
            <person name="Szekat C."/>
            <person name="Sahl H.G."/>
            <person name="Bierbaum G."/>
        </authorList>
    </citation>
    <scope>IDENTIFICATION</scope>
    <scope>FUNCTION</scope>
    <scope>SUBCELLULAR LOCATION</scope>
    <scope>MASS SPECTROMETRY</scope>
</reference>
<dbReference type="EMBL" id="CP000002">
    <property type="protein sequence ID" value="AAU25566.1"/>
    <property type="molecule type" value="Genomic_DNA"/>
</dbReference>
<dbReference type="EMBL" id="AE017333">
    <property type="protein sequence ID" value="AAU42940.1"/>
    <property type="molecule type" value="Genomic_DNA"/>
</dbReference>
<dbReference type="RefSeq" id="WP_003186381.1">
    <property type="nucleotide sequence ID" value="NC_006322.1"/>
</dbReference>
<dbReference type="SMR" id="Q65DC4"/>
<dbReference type="STRING" id="279010.BL05375"/>
<dbReference type="KEGG" id="bld:BLi04127"/>
<dbReference type="KEGG" id="bli:BL05375"/>
<dbReference type="eggNOG" id="ENOG50307DQ">
    <property type="taxonomic scope" value="Bacteria"/>
</dbReference>
<dbReference type="HOGENOM" id="CLU_186595_1_0_9"/>
<dbReference type="Proteomes" id="UP000000606">
    <property type="component" value="Chromosome"/>
</dbReference>
<dbReference type="GO" id="GO:0005576">
    <property type="term" value="C:extracellular region"/>
    <property type="evidence" value="ECO:0007669"/>
    <property type="project" value="UniProtKB-KW"/>
</dbReference>
<dbReference type="GO" id="GO:0009275">
    <property type="term" value="C:Gram-positive-bacterium-type cell wall"/>
    <property type="evidence" value="ECO:0000314"/>
    <property type="project" value="UniProtKB"/>
</dbReference>
<dbReference type="GO" id="GO:0005102">
    <property type="term" value="F:signaling receptor binding"/>
    <property type="evidence" value="ECO:0007669"/>
    <property type="project" value="UniProtKB-KW"/>
</dbReference>
<dbReference type="GO" id="GO:0050830">
    <property type="term" value="P:defense response to Gram-positive bacterium"/>
    <property type="evidence" value="ECO:0000314"/>
    <property type="project" value="UniProtKB"/>
</dbReference>
<dbReference type="GO" id="GO:0031640">
    <property type="term" value="P:killing of cells of another organism"/>
    <property type="evidence" value="ECO:0007669"/>
    <property type="project" value="UniProtKB-KW"/>
</dbReference>
<dbReference type="InterPro" id="IPR029243">
    <property type="entry name" value="Lantibiotic_alpha"/>
</dbReference>
<dbReference type="NCBIfam" id="NF000539">
    <property type="entry name" value="plantaricin"/>
    <property type="match status" value="1"/>
</dbReference>
<dbReference type="Pfam" id="PF14867">
    <property type="entry name" value="Lantibiotic_a"/>
    <property type="match status" value="1"/>
</dbReference>
<accession>Q65DC4</accession>
<accession>Q62NU5</accession>
<gene>
    <name evidence="5" type="primary">lanA1</name>
    <name evidence="8" type="synonym">lanA</name>
    <name evidence="6" type="synonym">licA1</name>
    <name type="ordered locus">BL05375</name>
    <name type="ordered locus">BLi04127</name>
</gene>
<keyword id="KW-0044">Antibiotic</keyword>
<keyword id="KW-0929">Antimicrobial</keyword>
<keyword id="KW-0078">Bacteriocin</keyword>
<keyword id="KW-0134">Cell wall</keyword>
<keyword id="KW-0425">Lantibiotic</keyword>
<keyword id="KW-1185">Reference proteome</keyword>
<keyword id="KW-0964">Secreted</keyword>
<keyword id="KW-0883">Thioether bond</keyword>
<protein>
    <recommendedName>
        <fullName evidence="5 6">Lantibiotic lichenicidin A1</fullName>
        <shortName evidence="2">LchA1</shortName>
    </recommendedName>
    <alternativeName>
        <fullName evidence="5">BliA1</fullName>
    </alternativeName>
</protein>
<feature type="propeptide" id="PRO_0000399038" evidence="2">
    <location>
        <begin position="1"/>
        <end position="42"/>
    </location>
</feature>
<feature type="peptide" id="PRO_0000399039" description="Lantibiotic lichenicidin A1" evidence="2">
    <location>
        <begin position="43"/>
        <end position="74"/>
    </location>
</feature>
<feature type="modified residue" description="2-oxobutanoic acid" evidence="2">
    <location>
        <position position="43"/>
    </location>
</feature>
<feature type="modified residue" description="2,3-didehydroalanine (Ser)" evidence="2">
    <location>
        <position position="47"/>
    </location>
</feature>
<feature type="modified residue" description="(Z)-2,3-didehydrobutyrine" evidence="2">
    <location>
        <position position="48"/>
    </location>
</feature>
<feature type="cross-link" description="Beta-methyllanthionine (Thr-Cys)" evidence="2">
    <location>
        <begin position="45"/>
        <end position="49"/>
    </location>
</feature>
<feature type="cross-link" description="Lanthionine (Ser-Cys)" evidence="2">
    <location>
        <begin position="53"/>
        <end position="63"/>
    </location>
</feature>
<feature type="cross-link" description="Beta-methyllanthionine (Thr-Cys)" evidence="2">
    <location>
        <begin position="64"/>
        <end position="69"/>
    </location>
</feature>
<feature type="cross-link" description="Beta-methyllanthionine (Thr-Cys)" evidence="2">
    <location>
        <begin position="66"/>
        <end position="73"/>
    </location>
</feature>
<name>LANLA_BACLD</name>
<proteinExistence type="evidence at protein level"/>
<organism>
    <name type="scientific">Bacillus licheniformis (strain ATCC 14580 / DSM 13 / JCM 2505 / CCUG 7422 / NBRC 12200 / NCIMB 9375 / NCTC 10341 / NRRL NRS-1264 / Gibson 46)</name>
    <dbReference type="NCBI Taxonomy" id="279010"/>
    <lineage>
        <taxon>Bacteria</taxon>
        <taxon>Bacillati</taxon>
        <taxon>Bacillota</taxon>
        <taxon>Bacilli</taxon>
        <taxon>Bacillales</taxon>
        <taxon>Bacillaceae</taxon>
        <taxon>Bacillus</taxon>
    </lineage>
</organism>
<sequence>MSKKEMILSWKNPMYRTESSYHPAGNILKELQEEEQHSIAGGTITLSTCAILSKPLGNNGYLCTVTKECMPSCN</sequence>
<comment type="function">
    <text evidence="3 4">Lanthionine-containing peptide antibiotic (lantibiotic) active on Gram-positive bacteria. The bactericidal activity of lantibiotics is based on depolarization of energized bacterial cytoplasmic membranes, initiated by the formation of aqueous transmembrane pores. When present individually, LchA1 exhibits activity towards L.lactis HP. When combined with LchA2, it displays activity towards a broad spectrum of non-pathogenic and pathogenic Gram-positive bacteria including strains of L.monocytogenes, methicillin-resistant S.aureus, S.pneumoniae and strains of vancomycin-resistant enterococci, but not towards E.faecium L4001 and BM4147-1. Combined LchA1 and LchA2 peptides also inhibit Bacillus sp. HIL-Y85/54728, L.lactis DPC3417 and B.halodurans C-125, which produce lantibiotics themselves. Inactivated by proteinase K and pronase E, but not by trypsin and chymotrypsin.</text>
</comment>
<comment type="subcellular location">
    <subcellularLocation>
        <location evidence="3 4">Secreted</location>
        <location evidence="3 4">Cell wall</location>
    </subcellularLocation>
</comment>
<comment type="PTM">
    <text evidence="1">Maturation of lantibiotics involves the enzymatic conversion of Thr, and Ser into dehydrated AA and the formation of thioether bonds with cysteine. This is followed by membrane translocation and cleavage of the modified precursor (By similarity).</text>
</comment>
<comment type="mass spectrometry"/>
<comment type="mass spectrometry"/>